<protein>
    <recommendedName>
        <fullName evidence="1">ATP synthase epsilon chain</fullName>
    </recommendedName>
    <alternativeName>
        <fullName evidence="1">ATP synthase F1 sector epsilon subunit</fullName>
    </alternativeName>
    <alternativeName>
        <fullName evidence="1">F-ATPase epsilon subunit</fullName>
    </alternativeName>
</protein>
<dbReference type="EMBL" id="AE016830">
    <property type="protein sequence ID" value="AAO82316.1"/>
    <property type="molecule type" value="Genomic_DNA"/>
</dbReference>
<dbReference type="RefSeq" id="NP_816246.1">
    <property type="nucleotide sequence ID" value="NC_004668.1"/>
</dbReference>
<dbReference type="RefSeq" id="WP_002356559.1">
    <property type="nucleotide sequence ID" value="NZ_KE136528.1"/>
</dbReference>
<dbReference type="SMR" id="Q831A6"/>
<dbReference type="STRING" id="226185.EF_2607"/>
<dbReference type="EnsemblBacteria" id="AAO82316">
    <property type="protein sequence ID" value="AAO82316"/>
    <property type="gene ID" value="EF_2607"/>
</dbReference>
<dbReference type="KEGG" id="efa:EF2607"/>
<dbReference type="PATRIC" id="fig|226185.45.peg.949"/>
<dbReference type="eggNOG" id="COG0355">
    <property type="taxonomic scope" value="Bacteria"/>
</dbReference>
<dbReference type="HOGENOM" id="CLU_084338_1_0_9"/>
<dbReference type="Proteomes" id="UP000001415">
    <property type="component" value="Chromosome"/>
</dbReference>
<dbReference type="GO" id="GO:0005886">
    <property type="term" value="C:plasma membrane"/>
    <property type="evidence" value="ECO:0007669"/>
    <property type="project" value="UniProtKB-SubCell"/>
</dbReference>
<dbReference type="GO" id="GO:0045259">
    <property type="term" value="C:proton-transporting ATP synthase complex"/>
    <property type="evidence" value="ECO:0007669"/>
    <property type="project" value="UniProtKB-KW"/>
</dbReference>
<dbReference type="GO" id="GO:0005524">
    <property type="term" value="F:ATP binding"/>
    <property type="evidence" value="ECO:0007669"/>
    <property type="project" value="UniProtKB-UniRule"/>
</dbReference>
<dbReference type="GO" id="GO:0046933">
    <property type="term" value="F:proton-transporting ATP synthase activity, rotational mechanism"/>
    <property type="evidence" value="ECO:0007669"/>
    <property type="project" value="UniProtKB-UniRule"/>
</dbReference>
<dbReference type="CDD" id="cd12152">
    <property type="entry name" value="F1-ATPase_delta"/>
    <property type="match status" value="1"/>
</dbReference>
<dbReference type="Gene3D" id="1.20.5.440">
    <property type="entry name" value="ATP synthase delta/epsilon subunit, C-terminal domain"/>
    <property type="match status" value="1"/>
</dbReference>
<dbReference type="Gene3D" id="2.60.15.10">
    <property type="entry name" value="F0F1 ATP synthase delta/epsilon subunit, N-terminal"/>
    <property type="match status" value="1"/>
</dbReference>
<dbReference type="HAMAP" id="MF_00530">
    <property type="entry name" value="ATP_synth_epsil_bac"/>
    <property type="match status" value="1"/>
</dbReference>
<dbReference type="InterPro" id="IPR036794">
    <property type="entry name" value="ATP_F1_dsu/esu_C_sf"/>
</dbReference>
<dbReference type="InterPro" id="IPR001469">
    <property type="entry name" value="ATP_synth_F1_dsu/esu"/>
</dbReference>
<dbReference type="InterPro" id="IPR020546">
    <property type="entry name" value="ATP_synth_F1_dsu/esu_N"/>
</dbReference>
<dbReference type="InterPro" id="IPR020547">
    <property type="entry name" value="ATP_synth_F1_esu_C"/>
</dbReference>
<dbReference type="InterPro" id="IPR036771">
    <property type="entry name" value="ATPsynth_dsu/esu_N"/>
</dbReference>
<dbReference type="NCBIfam" id="TIGR01216">
    <property type="entry name" value="ATP_synt_epsi"/>
    <property type="match status" value="1"/>
</dbReference>
<dbReference type="NCBIfam" id="NF001846">
    <property type="entry name" value="PRK00571.1-3"/>
    <property type="match status" value="1"/>
</dbReference>
<dbReference type="PANTHER" id="PTHR13822">
    <property type="entry name" value="ATP SYNTHASE DELTA/EPSILON CHAIN"/>
    <property type="match status" value="1"/>
</dbReference>
<dbReference type="PANTHER" id="PTHR13822:SF10">
    <property type="entry name" value="ATP SYNTHASE EPSILON CHAIN, CHLOROPLASTIC"/>
    <property type="match status" value="1"/>
</dbReference>
<dbReference type="Pfam" id="PF00401">
    <property type="entry name" value="ATP-synt_DE"/>
    <property type="match status" value="1"/>
</dbReference>
<dbReference type="Pfam" id="PF02823">
    <property type="entry name" value="ATP-synt_DE_N"/>
    <property type="match status" value="1"/>
</dbReference>
<dbReference type="SUPFAM" id="SSF46604">
    <property type="entry name" value="Epsilon subunit of F1F0-ATP synthase C-terminal domain"/>
    <property type="match status" value="1"/>
</dbReference>
<dbReference type="SUPFAM" id="SSF51344">
    <property type="entry name" value="Epsilon subunit of F1F0-ATP synthase N-terminal domain"/>
    <property type="match status" value="1"/>
</dbReference>
<reference key="1">
    <citation type="journal article" date="2003" name="Science">
        <title>Role of mobile DNA in the evolution of vancomycin-resistant Enterococcus faecalis.</title>
        <authorList>
            <person name="Paulsen I.T."/>
            <person name="Banerjei L."/>
            <person name="Myers G.S.A."/>
            <person name="Nelson K.E."/>
            <person name="Seshadri R."/>
            <person name="Read T.D."/>
            <person name="Fouts D.E."/>
            <person name="Eisen J.A."/>
            <person name="Gill S.R."/>
            <person name="Heidelberg J.F."/>
            <person name="Tettelin H."/>
            <person name="Dodson R.J."/>
            <person name="Umayam L.A."/>
            <person name="Brinkac L.M."/>
            <person name="Beanan M.J."/>
            <person name="Daugherty S.C."/>
            <person name="DeBoy R.T."/>
            <person name="Durkin S.A."/>
            <person name="Kolonay J.F."/>
            <person name="Madupu R."/>
            <person name="Nelson W.C."/>
            <person name="Vamathevan J.J."/>
            <person name="Tran B."/>
            <person name="Upton J."/>
            <person name="Hansen T."/>
            <person name="Shetty J."/>
            <person name="Khouri H.M."/>
            <person name="Utterback T.R."/>
            <person name="Radune D."/>
            <person name="Ketchum K.A."/>
            <person name="Dougherty B.A."/>
            <person name="Fraser C.M."/>
        </authorList>
    </citation>
    <scope>NUCLEOTIDE SEQUENCE [LARGE SCALE GENOMIC DNA]</scope>
    <source>
        <strain>ATCC 700802 / V583</strain>
    </source>
</reference>
<organism>
    <name type="scientific">Enterococcus faecalis (strain ATCC 700802 / V583)</name>
    <dbReference type="NCBI Taxonomy" id="226185"/>
    <lineage>
        <taxon>Bacteria</taxon>
        <taxon>Bacillati</taxon>
        <taxon>Bacillota</taxon>
        <taxon>Bacilli</taxon>
        <taxon>Lactobacillales</taxon>
        <taxon>Enterococcaceae</taxon>
        <taxon>Enterococcus</taxon>
    </lineage>
</organism>
<keyword id="KW-0066">ATP synthesis</keyword>
<keyword id="KW-1003">Cell membrane</keyword>
<keyword id="KW-0139">CF(1)</keyword>
<keyword id="KW-0375">Hydrogen ion transport</keyword>
<keyword id="KW-0406">Ion transport</keyword>
<keyword id="KW-0472">Membrane</keyword>
<keyword id="KW-1185">Reference proteome</keyword>
<keyword id="KW-0813">Transport</keyword>
<accession>Q831A6</accession>
<feature type="chain" id="PRO_0000188135" description="ATP synthase epsilon chain">
    <location>
        <begin position="1"/>
        <end position="139"/>
    </location>
</feature>
<proteinExistence type="inferred from homology"/>
<comment type="function">
    <text evidence="1">Produces ATP from ADP in the presence of a proton gradient across the membrane.</text>
</comment>
<comment type="subunit">
    <text>F-type ATPases have 2 components, CF(1) - the catalytic core - and CF(0) - the membrane proton channel. CF(1) has five subunits: alpha(3), beta(3), gamma(1), delta(1), epsilon(1). CF(0) has three main subunits: a, b and c.</text>
</comment>
<comment type="subcellular location">
    <subcellularLocation>
        <location evidence="1">Cell membrane</location>
        <topology evidence="1">Peripheral membrane protein</topology>
    </subcellularLocation>
</comment>
<comment type="similarity">
    <text evidence="1">Belongs to the ATPase epsilon chain family.</text>
</comment>
<evidence type="ECO:0000255" key="1">
    <source>
        <dbReference type="HAMAP-Rule" id="MF_00530"/>
    </source>
</evidence>
<name>ATPE_ENTFA</name>
<sequence>MDSLTVNVVTPNGLVYDHHAKIVVAKTTDGEIGILPKHAPIIVPLAIDEVRIKRTDSDTHVDWVAVNGGIMEVRDNVVSIIADSAERERDIDVPRAERAKQRAERLIEEAKAKDDRDQLRRATVALHRAINRINVSKHG</sequence>
<gene>
    <name evidence="1" type="primary">atpC</name>
    <name type="ordered locus">EF_2607</name>
</gene>